<name>DER_XYLFT</name>
<proteinExistence type="inferred from homology"/>
<evidence type="ECO:0000255" key="1">
    <source>
        <dbReference type="HAMAP-Rule" id="MF_00195"/>
    </source>
</evidence>
<dbReference type="EMBL" id="AE009442">
    <property type="protein sequence ID" value="AAO29459.1"/>
    <property type="molecule type" value="Genomic_DNA"/>
</dbReference>
<dbReference type="RefSeq" id="WP_004089777.1">
    <property type="nucleotide sequence ID" value="NC_004556.1"/>
</dbReference>
<dbReference type="SMR" id="Q87B41"/>
<dbReference type="GeneID" id="93905453"/>
<dbReference type="KEGG" id="xft:PD_1619"/>
<dbReference type="HOGENOM" id="CLU_016077_6_2_6"/>
<dbReference type="Proteomes" id="UP000002516">
    <property type="component" value="Chromosome"/>
</dbReference>
<dbReference type="GO" id="GO:0016887">
    <property type="term" value="F:ATP hydrolysis activity"/>
    <property type="evidence" value="ECO:0007669"/>
    <property type="project" value="InterPro"/>
</dbReference>
<dbReference type="GO" id="GO:0005525">
    <property type="term" value="F:GTP binding"/>
    <property type="evidence" value="ECO:0007669"/>
    <property type="project" value="UniProtKB-UniRule"/>
</dbReference>
<dbReference type="GO" id="GO:0043022">
    <property type="term" value="F:ribosome binding"/>
    <property type="evidence" value="ECO:0007669"/>
    <property type="project" value="TreeGrafter"/>
</dbReference>
<dbReference type="GO" id="GO:0042254">
    <property type="term" value="P:ribosome biogenesis"/>
    <property type="evidence" value="ECO:0007669"/>
    <property type="project" value="UniProtKB-KW"/>
</dbReference>
<dbReference type="CDD" id="cd01894">
    <property type="entry name" value="EngA1"/>
    <property type="match status" value="1"/>
</dbReference>
<dbReference type="CDD" id="cd01895">
    <property type="entry name" value="EngA2"/>
    <property type="match status" value="1"/>
</dbReference>
<dbReference type="FunFam" id="3.30.300.20:FF:000004">
    <property type="entry name" value="GTPase Der"/>
    <property type="match status" value="1"/>
</dbReference>
<dbReference type="FunFam" id="3.40.50.300:FF:000040">
    <property type="entry name" value="GTPase Der"/>
    <property type="match status" value="1"/>
</dbReference>
<dbReference type="FunFam" id="3.40.50.300:FF:000057">
    <property type="entry name" value="GTPase Der"/>
    <property type="match status" value="1"/>
</dbReference>
<dbReference type="Gene3D" id="3.30.300.20">
    <property type="match status" value="1"/>
</dbReference>
<dbReference type="Gene3D" id="3.40.50.300">
    <property type="entry name" value="P-loop containing nucleotide triphosphate hydrolases"/>
    <property type="match status" value="2"/>
</dbReference>
<dbReference type="HAMAP" id="MF_00195">
    <property type="entry name" value="GTPase_Der"/>
    <property type="match status" value="1"/>
</dbReference>
<dbReference type="InterPro" id="IPR003593">
    <property type="entry name" value="AAA+_ATPase"/>
</dbReference>
<dbReference type="InterPro" id="IPR031166">
    <property type="entry name" value="G_ENGA"/>
</dbReference>
<dbReference type="InterPro" id="IPR006073">
    <property type="entry name" value="GTP-bd"/>
</dbReference>
<dbReference type="InterPro" id="IPR016484">
    <property type="entry name" value="GTPase_Der"/>
</dbReference>
<dbReference type="InterPro" id="IPR032859">
    <property type="entry name" value="KH_dom-like"/>
</dbReference>
<dbReference type="InterPro" id="IPR015946">
    <property type="entry name" value="KH_dom-like_a/b"/>
</dbReference>
<dbReference type="InterPro" id="IPR027417">
    <property type="entry name" value="P-loop_NTPase"/>
</dbReference>
<dbReference type="InterPro" id="IPR005225">
    <property type="entry name" value="Small_GTP-bd"/>
</dbReference>
<dbReference type="NCBIfam" id="TIGR03594">
    <property type="entry name" value="GTPase_EngA"/>
    <property type="match status" value="1"/>
</dbReference>
<dbReference type="NCBIfam" id="TIGR00231">
    <property type="entry name" value="small_GTP"/>
    <property type="match status" value="2"/>
</dbReference>
<dbReference type="PANTHER" id="PTHR43834">
    <property type="entry name" value="GTPASE DER"/>
    <property type="match status" value="1"/>
</dbReference>
<dbReference type="PANTHER" id="PTHR43834:SF6">
    <property type="entry name" value="GTPASE DER"/>
    <property type="match status" value="1"/>
</dbReference>
<dbReference type="Pfam" id="PF14714">
    <property type="entry name" value="KH_dom-like"/>
    <property type="match status" value="1"/>
</dbReference>
<dbReference type="Pfam" id="PF01926">
    <property type="entry name" value="MMR_HSR1"/>
    <property type="match status" value="2"/>
</dbReference>
<dbReference type="PIRSF" id="PIRSF006485">
    <property type="entry name" value="GTP-binding_EngA"/>
    <property type="match status" value="1"/>
</dbReference>
<dbReference type="PRINTS" id="PR00326">
    <property type="entry name" value="GTP1OBG"/>
</dbReference>
<dbReference type="SMART" id="SM00382">
    <property type="entry name" value="AAA"/>
    <property type="match status" value="2"/>
</dbReference>
<dbReference type="SUPFAM" id="SSF52540">
    <property type="entry name" value="P-loop containing nucleoside triphosphate hydrolases"/>
    <property type="match status" value="2"/>
</dbReference>
<dbReference type="PROSITE" id="PS51712">
    <property type="entry name" value="G_ENGA"/>
    <property type="match status" value="2"/>
</dbReference>
<keyword id="KW-0342">GTP-binding</keyword>
<keyword id="KW-0547">Nucleotide-binding</keyword>
<keyword id="KW-1185">Reference proteome</keyword>
<keyword id="KW-0677">Repeat</keyword>
<keyword id="KW-0690">Ribosome biogenesis</keyword>
<organism>
    <name type="scientific">Xylella fastidiosa (strain Temecula1 / ATCC 700964)</name>
    <dbReference type="NCBI Taxonomy" id="183190"/>
    <lineage>
        <taxon>Bacteria</taxon>
        <taxon>Pseudomonadati</taxon>
        <taxon>Pseudomonadota</taxon>
        <taxon>Gammaproteobacteria</taxon>
        <taxon>Lysobacterales</taxon>
        <taxon>Lysobacteraceae</taxon>
        <taxon>Xylella</taxon>
    </lineage>
</organism>
<sequence>MLPLVALVGRPNVGKSTLFNALTLTRDALVHDQPGVTRDRHYGVCRIDGQPLFAVVDTGGMVGKEDGLAGATARQARLAVAEADVVLFVVNVREGASALDDDILAWLRKLSQPTLLVINKIDGVSDTTVHSEFAHYGFSDVVPVSAAHRQGLDDLIEQVLAWLPERSIGEAFNEDSERIHIAFVGRPNVGKSTLVNRLLGEERMIVSDVPGTTRDSITVDLERDELRYRLVDTAGLRRKSKVEEAVEKFSAFKTLQAIEQCQVAVLLLDAGEGVTDQDATVLAAILDAGKALVVAMNKWDGLATYQREQAEDLLSRKLGFVNWAEVVRLSAKHGSGLRELFRAIHRAHVSALRQFSTSEVNKALEIAYQTAPPPSIRGHVSKLRYVHPAGSNPPTFIVHGTRLKVLPDTYKRYLENFFRKRFKLVGTPVRFLFREGDNPYEGRKNVLSERQIQRRRRLMRHVKRK</sequence>
<comment type="function">
    <text evidence="1">GTPase that plays an essential role in the late steps of ribosome biogenesis.</text>
</comment>
<comment type="subunit">
    <text evidence="1">Associates with the 50S ribosomal subunit.</text>
</comment>
<comment type="similarity">
    <text evidence="1">Belongs to the TRAFAC class TrmE-Era-EngA-EngB-Septin-like GTPase superfamily. EngA (Der) GTPase family.</text>
</comment>
<feature type="chain" id="PRO_0000179076" description="GTPase Der">
    <location>
        <begin position="1"/>
        <end position="465"/>
    </location>
</feature>
<feature type="domain" description="EngA-type G 1">
    <location>
        <begin position="3"/>
        <end position="167"/>
    </location>
</feature>
<feature type="domain" description="EngA-type G 2">
    <location>
        <begin position="179"/>
        <end position="352"/>
    </location>
</feature>
<feature type="domain" description="KH-like" evidence="1">
    <location>
        <begin position="353"/>
        <end position="437"/>
    </location>
</feature>
<feature type="binding site" evidence="1">
    <location>
        <begin position="9"/>
        <end position="16"/>
    </location>
    <ligand>
        <name>GTP</name>
        <dbReference type="ChEBI" id="CHEBI:37565"/>
        <label>1</label>
    </ligand>
</feature>
<feature type="binding site" evidence="1">
    <location>
        <begin position="57"/>
        <end position="61"/>
    </location>
    <ligand>
        <name>GTP</name>
        <dbReference type="ChEBI" id="CHEBI:37565"/>
        <label>1</label>
    </ligand>
</feature>
<feature type="binding site" evidence="1">
    <location>
        <begin position="119"/>
        <end position="122"/>
    </location>
    <ligand>
        <name>GTP</name>
        <dbReference type="ChEBI" id="CHEBI:37565"/>
        <label>1</label>
    </ligand>
</feature>
<feature type="binding site" evidence="1">
    <location>
        <begin position="185"/>
        <end position="192"/>
    </location>
    <ligand>
        <name>GTP</name>
        <dbReference type="ChEBI" id="CHEBI:37565"/>
        <label>2</label>
    </ligand>
</feature>
<feature type="binding site" evidence="1">
    <location>
        <begin position="232"/>
        <end position="236"/>
    </location>
    <ligand>
        <name>GTP</name>
        <dbReference type="ChEBI" id="CHEBI:37565"/>
        <label>2</label>
    </ligand>
</feature>
<feature type="binding site" evidence="1">
    <location>
        <begin position="297"/>
        <end position="300"/>
    </location>
    <ligand>
        <name>GTP</name>
        <dbReference type="ChEBI" id="CHEBI:37565"/>
        <label>2</label>
    </ligand>
</feature>
<gene>
    <name evidence="1" type="primary">der</name>
    <name type="synonym">engA</name>
    <name type="ordered locus">PD_1619</name>
</gene>
<accession>Q87B41</accession>
<reference key="1">
    <citation type="journal article" date="2003" name="J. Bacteriol.">
        <title>Comparative analyses of the complete genome sequences of Pierce's disease and citrus variegated chlorosis strains of Xylella fastidiosa.</title>
        <authorList>
            <person name="Van Sluys M.A."/>
            <person name="de Oliveira M.C."/>
            <person name="Monteiro-Vitorello C.B."/>
            <person name="Miyaki C.Y."/>
            <person name="Furlan L.R."/>
            <person name="Camargo L.E.A."/>
            <person name="da Silva A.C.R."/>
            <person name="Moon D.H."/>
            <person name="Takita M.A."/>
            <person name="Lemos E.G.M."/>
            <person name="Machado M.A."/>
            <person name="Ferro M.I.T."/>
            <person name="da Silva F.R."/>
            <person name="Goldman M.H.S."/>
            <person name="Goldman G.H."/>
            <person name="Lemos M.V.F."/>
            <person name="El-Dorry H."/>
            <person name="Tsai S.M."/>
            <person name="Carrer H."/>
            <person name="Carraro D.M."/>
            <person name="de Oliveira R.C."/>
            <person name="Nunes L.R."/>
            <person name="Siqueira W.J."/>
            <person name="Coutinho L.L."/>
            <person name="Kimura E.T."/>
            <person name="Ferro E.S."/>
            <person name="Harakava R."/>
            <person name="Kuramae E.E."/>
            <person name="Marino C.L."/>
            <person name="Giglioti E."/>
            <person name="Abreu I.L."/>
            <person name="Alves L.M.C."/>
            <person name="do Amaral A.M."/>
            <person name="Baia G.S."/>
            <person name="Blanco S.R."/>
            <person name="Brito M.S."/>
            <person name="Cannavan F.S."/>
            <person name="Celestino A.V."/>
            <person name="da Cunha A.F."/>
            <person name="Fenille R.C."/>
            <person name="Ferro J.A."/>
            <person name="Formighieri E.F."/>
            <person name="Kishi L.T."/>
            <person name="Leoni S.G."/>
            <person name="Oliveira A.R."/>
            <person name="Rosa V.E. Jr."/>
            <person name="Sassaki F.T."/>
            <person name="Sena J.A.D."/>
            <person name="de Souza A.A."/>
            <person name="Truffi D."/>
            <person name="Tsukumo F."/>
            <person name="Yanai G.M."/>
            <person name="Zaros L.G."/>
            <person name="Civerolo E.L."/>
            <person name="Simpson A.J.G."/>
            <person name="Almeida N.F. Jr."/>
            <person name="Setubal J.C."/>
            <person name="Kitajima J.P."/>
        </authorList>
    </citation>
    <scope>NUCLEOTIDE SEQUENCE [LARGE SCALE GENOMIC DNA]</scope>
    <source>
        <strain>Temecula1 / ATCC 700964</strain>
    </source>
</reference>
<protein>
    <recommendedName>
        <fullName evidence="1">GTPase Der</fullName>
    </recommendedName>
    <alternativeName>
        <fullName evidence="1">GTP-binding protein EngA</fullName>
    </alternativeName>
</protein>